<dbReference type="EMBL" id="CP000733">
    <property type="protein sequence ID" value="ABS78432.1"/>
    <property type="molecule type" value="Genomic_DNA"/>
</dbReference>
<dbReference type="RefSeq" id="WP_005770882.1">
    <property type="nucleotide sequence ID" value="NC_009727.1"/>
</dbReference>
<dbReference type="SMR" id="A9KG88"/>
<dbReference type="KEGG" id="cbd:CBUD_1378"/>
<dbReference type="HOGENOM" id="CLU_005965_2_1_6"/>
<dbReference type="Proteomes" id="UP000008555">
    <property type="component" value="Chromosome"/>
</dbReference>
<dbReference type="GO" id="GO:0005524">
    <property type="term" value="F:ATP binding"/>
    <property type="evidence" value="ECO:0007669"/>
    <property type="project" value="UniProtKB-UniRule"/>
</dbReference>
<dbReference type="GO" id="GO:0140662">
    <property type="term" value="F:ATP-dependent protein folding chaperone"/>
    <property type="evidence" value="ECO:0007669"/>
    <property type="project" value="InterPro"/>
</dbReference>
<dbReference type="GO" id="GO:0051082">
    <property type="term" value="F:unfolded protein binding"/>
    <property type="evidence" value="ECO:0007669"/>
    <property type="project" value="InterPro"/>
</dbReference>
<dbReference type="CDD" id="cd10234">
    <property type="entry name" value="ASKHA_NBD_HSP70_DnaK-like"/>
    <property type="match status" value="1"/>
</dbReference>
<dbReference type="FunFam" id="2.60.34.10:FF:000014">
    <property type="entry name" value="Chaperone protein DnaK HSP70"/>
    <property type="match status" value="1"/>
</dbReference>
<dbReference type="FunFam" id="3.30.30.30:FF:000003">
    <property type="entry name" value="Heat shock protein 9"/>
    <property type="match status" value="1"/>
</dbReference>
<dbReference type="FunFam" id="1.20.1270.10:FF:000001">
    <property type="entry name" value="Molecular chaperone DnaK"/>
    <property type="match status" value="1"/>
</dbReference>
<dbReference type="FunFam" id="3.30.420.40:FF:000004">
    <property type="entry name" value="Molecular chaperone DnaK"/>
    <property type="match status" value="1"/>
</dbReference>
<dbReference type="FunFam" id="3.90.640.10:FF:000003">
    <property type="entry name" value="Molecular chaperone DnaK"/>
    <property type="match status" value="1"/>
</dbReference>
<dbReference type="Gene3D" id="1.20.1270.10">
    <property type="match status" value="1"/>
</dbReference>
<dbReference type="Gene3D" id="3.30.420.40">
    <property type="match status" value="2"/>
</dbReference>
<dbReference type="Gene3D" id="3.90.640.10">
    <property type="entry name" value="Actin, Chain A, domain 4"/>
    <property type="match status" value="1"/>
</dbReference>
<dbReference type="Gene3D" id="2.60.34.10">
    <property type="entry name" value="Substrate Binding Domain Of DNAk, Chain A, domain 1"/>
    <property type="match status" value="1"/>
</dbReference>
<dbReference type="HAMAP" id="MF_00332">
    <property type="entry name" value="DnaK"/>
    <property type="match status" value="1"/>
</dbReference>
<dbReference type="InterPro" id="IPR043129">
    <property type="entry name" value="ATPase_NBD"/>
</dbReference>
<dbReference type="InterPro" id="IPR012725">
    <property type="entry name" value="Chaperone_DnaK"/>
</dbReference>
<dbReference type="InterPro" id="IPR018181">
    <property type="entry name" value="Heat_shock_70_CS"/>
</dbReference>
<dbReference type="InterPro" id="IPR029048">
    <property type="entry name" value="HSP70_C_sf"/>
</dbReference>
<dbReference type="InterPro" id="IPR029047">
    <property type="entry name" value="HSP70_peptide-bd_sf"/>
</dbReference>
<dbReference type="InterPro" id="IPR013126">
    <property type="entry name" value="Hsp_70_fam"/>
</dbReference>
<dbReference type="NCBIfam" id="NF001413">
    <property type="entry name" value="PRK00290.1"/>
    <property type="match status" value="1"/>
</dbReference>
<dbReference type="NCBIfam" id="NF003520">
    <property type="entry name" value="PRK05183.1"/>
    <property type="match status" value="1"/>
</dbReference>
<dbReference type="NCBIfam" id="TIGR02350">
    <property type="entry name" value="prok_dnaK"/>
    <property type="match status" value="1"/>
</dbReference>
<dbReference type="PANTHER" id="PTHR19375">
    <property type="entry name" value="HEAT SHOCK PROTEIN 70KDA"/>
    <property type="match status" value="1"/>
</dbReference>
<dbReference type="Pfam" id="PF00012">
    <property type="entry name" value="HSP70"/>
    <property type="match status" value="1"/>
</dbReference>
<dbReference type="PRINTS" id="PR00301">
    <property type="entry name" value="HEATSHOCK70"/>
</dbReference>
<dbReference type="SUPFAM" id="SSF53067">
    <property type="entry name" value="Actin-like ATPase domain"/>
    <property type="match status" value="2"/>
</dbReference>
<dbReference type="SUPFAM" id="SSF100934">
    <property type="entry name" value="Heat shock protein 70kD (HSP70), C-terminal subdomain"/>
    <property type="match status" value="1"/>
</dbReference>
<dbReference type="SUPFAM" id="SSF100920">
    <property type="entry name" value="Heat shock protein 70kD (HSP70), peptide-binding domain"/>
    <property type="match status" value="1"/>
</dbReference>
<dbReference type="PROSITE" id="PS00297">
    <property type="entry name" value="HSP70_1"/>
    <property type="match status" value="1"/>
</dbReference>
<dbReference type="PROSITE" id="PS00329">
    <property type="entry name" value="HSP70_2"/>
    <property type="match status" value="1"/>
</dbReference>
<dbReference type="PROSITE" id="PS01036">
    <property type="entry name" value="HSP70_3"/>
    <property type="match status" value="1"/>
</dbReference>
<sequence>MAEIIGIDLGTTNSCVAVMEGGKVRVIENAEGSRTTPSIVAYTKDGEVLVGASAKRQAVTNADRTLYAIKRLIGRRFDDNVVQKDIKMVPYKIIKADNGDAWVEVKDKEGKSQKLAPPQISAQVLIKMKKTAEDYLGHEVKDAVITVPAYFNDSQRQATKDAGKIAGLNVKRIINEPTAAALAYGMDKKKGDRKIAVYDLGGGTFDISIIEIAEVDGEHQFEVLATNGDTFLGGEDFDLRLIDYLAGEFKKDEGVDLHNDPLALQRLKEAAEKAKIELSSSQQTDVNLPYITADASGPKHLNIRLTRAKLESLVEDLVERTIEPCKVAIKDAGLKVSEIDDVILVGGQTRMPKVQEAVKNFFGKEARKDVNPDEAVAIGAAIQGAVLSGEVKDVLLLDVTPLSLGIETLGGVMTKLIEKNTTIPTKANQVFSTADDNQTAVTVHVLQGEREMASANKSLGRFDLSDIPPAPRGVPQIEVTFDIDANGILHVSAKDKATGKEQSIVIKASSGLSDEEVEKMVKDAEAHRDSDRKFHELVDARNQADAMIHAAEKSVKDLGSEVSADEKSAIEKAVNELKEAMKGNDKDAIEAKTKALTEHSSKLAERVYAKKGGAAGAPPGGEAEGEPQAQAGGKKEDVVDAEFEEVKDEKKKDEDK</sequence>
<feature type="chain" id="PRO_1000079222" description="Chaperone protein DnaK">
    <location>
        <begin position="1"/>
        <end position="656"/>
    </location>
</feature>
<feature type="region of interest" description="Disordered" evidence="2">
    <location>
        <begin position="607"/>
        <end position="656"/>
    </location>
</feature>
<feature type="compositionally biased region" description="Low complexity" evidence="2">
    <location>
        <begin position="620"/>
        <end position="632"/>
    </location>
</feature>
<feature type="compositionally biased region" description="Basic and acidic residues" evidence="2">
    <location>
        <begin position="647"/>
        <end position="656"/>
    </location>
</feature>
<feature type="modified residue" description="Phosphothreonine; by autocatalysis" evidence="1">
    <location>
        <position position="204"/>
    </location>
</feature>
<reference key="1">
    <citation type="journal article" date="2009" name="Infect. Immun.">
        <title>Comparative genomics reveal extensive transposon-mediated genomic plasticity and diversity among potential effector proteins within the genus Coxiella.</title>
        <authorList>
            <person name="Beare P.A."/>
            <person name="Unsworth N."/>
            <person name="Andoh M."/>
            <person name="Voth D.E."/>
            <person name="Omsland A."/>
            <person name="Gilk S.D."/>
            <person name="Williams K.P."/>
            <person name="Sobral B.W."/>
            <person name="Kupko J.J. III"/>
            <person name="Porcella S.F."/>
            <person name="Samuel J.E."/>
            <person name="Heinzen R.A."/>
        </authorList>
    </citation>
    <scope>NUCLEOTIDE SEQUENCE [LARGE SCALE GENOMIC DNA]</scope>
    <source>
        <strain>Dugway 5J108-111</strain>
    </source>
</reference>
<accession>A9KG88</accession>
<organism>
    <name type="scientific">Coxiella burnetii (strain Dugway 5J108-111)</name>
    <dbReference type="NCBI Taxonomy" id="434922"/>
    <lineage>
        <taxon>Bacteria</taxon>
        <taxon>Pseudomonadati</taxon>
        <taxon>Pseudomonadota</taxon>
        <taxon>Gammaproteobacteria</taxon>
        <taxon>Legionellales</taxon>
        <taxon>Coxiellaceae</taxon>
        <taxon>Coxiella</taxon>
    </lineage>
</organism>
<name>DNAK_COXBN</name>
<proteinExistence type="inferred from homology"/>
<evidence type="ECO:0000255" key="1">
    <source>
        <dbReference type="HAMAP-Rule" id="MF_00332"/>
    </source>
</evidence>
<evidence type="ECO:0000256" key="2">
    <source>
        <dbReference type="SAM" id="MobiDB-lite"/>
    </source>
</evidence>
<keyword id="KW-0067">ATP-binding</keyword>
<keyword id="KW-0143">Chaperone</keyword>
<keyword id="KW-0547">Nucleotide-binding</keyword>
<keyword id="KW-0597">Phosphoprotein</keyword>
<keyword id="KW-0346">Stress response</keyword>
<protein>
    <recommendedName>
        <fullName evidence="1">Chaperone protein DnaK</fullName>
    </recommendedName>
    <alternativeName>
        <fullName evidence="1">HSP70</fullName>
    </alternativeName>
    <alternativeName>
        <fullName evidence="1">Heat shock 70 kDa protein</fullName>
    </alternativeName>
    <alternativeName>
        <fullName evidence="1">Heat shock protein 70</fullName>
    </alternativeName>
</protein>
<comment type="function">
    <text evidence="1">Acts as a chaperone.</text>
</comment>
<comment type="induction">
    <text evidence="1">By stress conditions e.g. heat shock.</text>
</comment>
<comment type="similarity">
    <text evidence="1">Belongs to the heat shock protein 70 family.</text>
</comment>
<gene>
    <name evidence="1" type="primary">dnaK</name>
    <name type="ordered locus">CBUD_1378</name>
</gene>